<name>SYN_CLOB8</name>
<accession>A6LPI6</accession>
<gene>
    <name evidence="1" type="primary">asnS</name>
    <name type="ordered locus">Cbei_0076</name>
</gene>
<dbReference type="EC" id="6.1.1.22" evidence="1"/>
<dbReference type="EMBL" id="CP000721">
    <property type="protein sequence ID" value="ABR32266.1"/>
    <property type="molecule type" value="Genomic_DNA"/>
</dbReference>
<dbReference type="RefSeq" id="WP_011967441.1">
    <property type="nucleotide sequence ID" value="NC_009617.1"/>
</dbReference>
<dbReference type="SMR" id="A6LPI6"/>
<dbReference type="KEGG" id="cbe:Cbei_0076"/>
<dbReference type="eggNOG" id="COG0017">
    <property type="taxonomic scope" value="Bacteria"/>
</dbReference>
<dbReference type="HOGENOM" id="CLU_004553_2_0_9"/>
<dbReference type="Proteomes" id="UP000000565">
    <property type="component" value="Chromosome"/>
</dbReference>
<dbReference type="GO" id="GO:0005737">
    <property type="term" value="C:cytoplasm"/>
    <property type="evidence" value="ECO:0007669"/>
    <property type="project" value="UniProtKB-SubCell"/>
</dbReference>
<dbReference type="GO" id="GO:0004816">
    <property type="term" value="F:asparagine-tRNA ligase activity"/>
    <property type="evidence" value="ECO:0007669"/>
    <property type="project" value="UniProtKB-UniRule"/>
</dbReference>
<dbReference type="GO" id="GO:0005524">
    <property type="term" value="F:ATP binding"/>
    <property type="evidence" value="ECO:0007669"/>
    <property type="project" value="UniProtKB-UniRule"/>
</dbReference>
<dbReference type="GO" id="GO:0140096">
    <property type="term" value="F:catalytic activity, acting on a protein"/>
    <property type="evidence" value="ECO:0007669"/>
    <property type="project" value="UniProtKB-ARBA"/>
</dbReference>
<dbReference type="GO" id="GO:0003676">
    <property type="term" value="F:nucleic acid binding"/>
    <property type="evidence" value="ECO:0007669"/>
    <property type="project" value="InterPro"/>
</dbReference>
<dbReference type="GO" id="GO:0016740">
    <property type="term" value="F:transferase activity"/>
    <property type="evidence" value="ECO:0007669"/>
    <property type="project" value="UniProtKB-ARBA"/>
</dbReference>
<dbReference type="GO" id="GO:0006421">
    <property type="term" value="P:asparaginyl-tRNA aminoacylation"/>
    <property type="evidence" value="ECO:0007669"/>
    <property type="project" value="UniProtKB-UniRule"/>
</dbReference>
<dbReference type="CDD" id="cd00776">
    <property type="entry name" value="AsxRS_core"/>
    <property type="match status" value="1"/>
</dbReference>
<dbReference type="CDD" id="cd04318">
    <property type="entry name" value="EcAsnRS_like_N"/>
    <property type="match status" value="1"/>
</dbReference>
<dbReference type="FunFam" id="3.30.930.10:FF:000016">
    <property type="entry name" value="Asparagine--tRNA ligase"/>
    <property type="match status" value="1"/>
</dbReference>
<dbReference type="Gene3D" id="3.30.930.10">
    <property type="entry name" value="Bira Bifunctional Protein, Domain 2"/>
    <property type="match status" value="1"/>
</dbReference>
<dbReference type="Gene3D" id="2.40.50.140">
    <property type="entry name" value="Nucleic acid-binding proteins"/>
    <property type="match status" value="1"/>
</dbReference>
<dbReference type="HAMAP" id="MF_00534">
    <property type="entry name" value="Asn_tRNA_synth"/>
    <property type="match status" value="1"/>
</dbReference>
<dbReference type="InterPro" id="IPR004364">
    <property type="entry name" value="Aa-tRNA-synt_II"/>
</dbReference>
<dbReference type="InterPro" id="IPR006195">
    <property type="entry name" value="aa-tRNA-synth_II"/>
</dbReference>
<dbReference type="InterPro" id="IPR045864">
    <property type="entry name" value="aa-tRNA-synth_II/BPL/LPL"/>
</dbReference>
<dbReference type="InterPro" id="IPR004522">
    <property type="entry name" value="Asn-tRNA-ligase"/>
</dbReference>
<dbReference type="InterPro" id="IPR002312">
    <property type="entry name" value="Asp/Asn-tRNA-synth_IIb"/>
</dbReference>
<dbReference type="InterPro" id="IPR012340">
    <property type="entry name" value="NA-bd_OB-fold"/>
</dbReference>
<dbReference type="InterPro" id="IPR004365">
    <property type="entry name" value="NA-bd_OB_tRNA"/>
</dbReference>
<dbReference type="NCBIfam" id="TIGR00457">
    <property type="entry name" value="asnS"/>
    <property type="match status" value="1"/>
</dbReference>
<dbReference type="NCBIfam" id="NF003037">
    <property type="entry name" value="PRK03932.1"/>
    <property type="match status" value="1"/>
</dbReference>
<dbReference type="PANTHER" id="PTHR22594:SF34">
    <property type="entry name" value="ASPARAGINE--TRNA LIGASE, MITOCHONDRIAL-RELATED"/>
    <property type="match status" value="1"/>
</dbReference>
<dbReference type="PANTHER" id="PTHR22594">
    <property type="entry name" value="ASPARTYL/LYSYL-TRNA SYNTHETASE"/>
    <property type="match status" value="1"/>
</dbReference>
<dbReference type="Pfam" id="PF00152">
    <property type="entry name" value="tRNA-synt_2"/>
    <property type="match status" value="1"/>
</dbReference>
<dbReference type="Pfam" id="PF01336">
    <property type="entry name" value="tRNA_anti-codon"/>
    <property type="match status" value="1"/>
</dbReference>
<dbReference type="PRINTS" id="PR01042">
    <property type="entry name" value="TRNASYNTHASP"/>
</dbReference>
<dbReference type="SUPFAM" id="SSF55681">
    <property type="entry name" value="Class II aaRS and biotin synthetases"/>
    <property type="match status" value="1"/>
</dbReference>
<dbReference type="SUPFAM" id="SSF50249">
    <property type="entry name" value="Nucleic acid-binding proteins"/>
    <property type="match status" value="1"/>
</dbReference>
<dbReference type="PROSITE" id="PS50862">
    <property type="entry name" value="AA_TRNA_LIGASE_II"/>
    <property type="match status" value="1"/>
</dbReference>
<evidence type="ECO:0000255" key="1">
    <source>
        <dbReference type="HAMAP-Rule" id="MF_00534"/>
    </source>
</evidence>
<proteinExistence type="inferred from homology"/>
<comment type="catalytic activity">
    <reaction evidence="1">
        <text>tRNA(Asn) + L-asparagine + ATP = L-asparaginyl-tRNA(Asn) + AMP + diphosphate + H(+)</text>
        <dbReference type="Rhea" id="RHEA:11180"/>
        <dbReference type="Rhea" id="RHEA-COMP:9659"/>
        <dbReference type="Rhea" id="RHEA-COMP:9674"/>
        <dbReference type="ChEBI" id="CHEBI:15378"/>
        <dbReference type="ChEBI" id="CHEBI:30616"/>
        <dbReference type="ChEBI" id="CHEBI:33019"/>
        <dbReference type="ChEBI" id="CHEBI:58048"/>
        <dbReference type="ChEBI" id="CHEBI:78442"/>
        <dbReference type="ChEBI" id="CHEBI:78515"/>
        <dbReference type="ChEBI" id="CHEBI:456215"/>
        <dbReference type="EC" id="6.1.1.22"/>
    </reaction>
</comment>
<comment type="subunit">
    <text evidence="1">Homodimer.</text>
</comment>
<comment type="subcellular location">
    <subcellularLocation>
        <location evidence="1">Cytoplasm</location>
    </subcellularLocation>
</comment>
<comment type="similarity">
    <text evidence="1">Belongs to the class-II aminoacyl-tRNA synthetase family.</text>
</comment>
<reference key="1">
    <citation type="submission" date="2007-06" db="EMBL/GenBank/DDBJ databases">
        <title>Complete sequence of Clostridium beijerinckii NCIMB 8052.</title>
        <authorList>
            <consortium name="US DOE Joint Genome Institute"/>
            <person name="Copeland A."/>
            <person name="Lucas S."/>
            <person name="Lapidus A."/>
            <person name="Barry K."/>
            <person name="Detter J.C."/>
            <person name="Glavina del Rio T."/>
            <person name="Hammon N."/>
            <person name="Israni S."/>
            <person name="Dalin E."/>
            <person name="Tice H."/>
            <person name="Pitluck S."/>
            <person name="Sims D."/>
            <person name="Brettin T."/>
            <person name="Bruce D."/>
            <person name="Tapia R."/>
            <person name="Brainard J."/>
            <person name="Schmutz J."/>
            <person name="Larimer F."/>
            <person name="Land M."/>
            <person name="Hauser L."/>
            <person name="Kyrpides N."/>
            <person name="Mikhailova N."/>
            <person name="Bennet G."/>
            <person name="Cann I."/>
            <person name="Chen J.-S."/>
            <person name="Contreras A.L."/>
            <person name="Jones D."/>
            <person name="Kashket E."/>
            <person name="Mitchell W."/>
            <person name="Stoddard S."/>
            <person name="Schwarz W."/>
            <person name="Qureshi N."/>
            <person name="Young M."/>
            <person name="Shi Z."/>
            <person name="Ezeji T."/>
            <person name="White B."/>
            <person name="Blaschek H."/>
            <person name="Richardson P."/>
        </authorList>
    </citation>
    <scope>NUCLEOTIDE SEQUENCE [LARGE SCALE GENOMIC DNA]</scope>
    <source>
        <strain>ATCC 51743 / NCIMB 8052</strain>
    </source>
</reference>
<organism>
    <name type="scientific">Clostridium beijerinckii (strain ATCC 51743 / NCIMB 8052)</name>
    <name type="common">Clostridium acetobutylicum</name>
    <dbReference type="NCBI Taxonomy" id="290402"/>
    <lineage>
        <taxon>Bacteria</taxon>
        <taxon>Bacillati</taxon>
        <taxon>Bacillota</taxon>
        <taxon>Clostridia</taxon>
        <taxon>Eubacteriales</taxon>
        <taxon>Clostridiaceae</taxon>
        <taxon>Clostridium</taxon>
    </lineage>
</organism>
<feature type="chain" id="PRO_1000128203" description="Asparagine--tRNA ligase">
    <location>
        <begin position="1"/>
        <end position="464"/>
    </location>
</feature>
<protein>
    <recommendedName>
        <fullName evidence="1">Asparagine--tRNA ligase</fullName>
        <ecNumber evidence="1">6.1.1.22</ecNumber>
    </recommendedName>
    <alternativeName>
        <fullName evidence="1">Asparaginyl-tRNA synthetase</fullName>
        <shortName evidence="1">AsnRS</shortName>
    </alternativeName>
</protein>
<sequence>MAKSILIRSLYRNTDDFLSKEITISGWIRTLRSSNAFGFIEVNDGSFFKNIQVVFDDKLNNFKEISKLPISSSISVIGILVATPEAKQPFEIQAKNIIIEGMSNSDYPLQKKRHTFEYLRTIAHLRPRSNAFAATFRVRSVAAYAIHKFFQDQNFVYTHTPIITGSDCEGAGEMFRVTTLDPKTPELSKDGSVDFSKDFFGKETNLTVSGQLNAECFALAFRNIYTFGPTFRAENSNTTRHAAEFWMIEPEIAFADLQDDMELAENMLKYVIKYVMDECPEELEFFNQFVDKGLLERLNHVVSSDFAKVTYTEAVEILQKCGKKFDYDVSWGIDLQTEHERYLTEEHFKKPLFVTDYPKDIKAFYMRLNDDGKTVAATDLLVPGIGEIIGGSQREERLDVLKDRMTELNLSEDDYWWYLELRKYGETKHAGFGLGFERLIMYITGMTNIRDVVPFPRTPGTSEF</sequence>
<keyword id="KW-0030">Aminoacyl-tRNA synthetase</keyword>
<keyword id="KW-0067">ATP-binding</keyword>
<keyword id="KW-0963">Cytoplasm</keyword>
<keyword id="KW-0436">Ligase</keyword>
<keyword id="KW-0547">Nucleotide-binding</keyword>
<keyword id="KW-0648">Protein biosynthesis</keyword>